<dbReference type="EC" id="3.6.4.-" evidence="2"/>
<dbReference type="EMBL" id="DS480402">
    <property type="protein sequence ID" value="EDO17526.1"/>
    <property type="molecule type" value="Genomic_DNA"/>
</dbReference>
<dbReference type="RefSeq" id="XP_001645384.1">
    <property type="nucleotide sequence ID" value="XM_001645334.1"/>
</dbReference>
<dbReference type="SMR" id="A7TJI3"/>
<dbReference type="FunCoup" id="A7TJI3">
    <property type="interactions" value="1178"/>
</dbReference>
<dbReference type="STRING" id="436907.A7TJI3"/>
<dbReference type="GeneID" id="5545748"/>
<dbReference type="KEGG" id="vpo:Kpol_534p5"/>
<dbReference type="eggNOG" id="KOG0388">
    <property type="taxonomic scope" value="Eukaryota"/>
</dbReference>
<dbReference type="HOGENOM" id="CLU_000315_26_2_1"/>
<dbReference type="InParanoid" id="A7TJI3"/>
<dbReference type="OMA" id="GNHTPLM"/>
<dbReference type="OrthoDB" id="372624at2759"/>
<dbReference type="Proteomes" id="UP000000267">
    <property type="component" value="Unassembled WGS sequence"/>
</dbReference>
<dbReference type="GO" id="GO:0000775">
    <property type="term" value="C:chromosome, centromeric region"/>
    <property type="evidence" value="ECO:0007669"/>
    <property type="project" value="EnsemblFungi"/>
</dbReference>
<dbReference type="GO" id="GO:0000781">
    <property type="term" value="C:chromosome, telomeric region"/>
    <property type="evidence" value="ECO:0007669"/>
    <property type="project" value="GOC"/>
</dbReference>
<dbReference type="GO" id="GO:0031011">
    <property type="term" value="C:Ino80 complex"/>
    <property type="evidence" value="ECO:0007669"/>
    <property type="project" value="EnsemblFungi"/>
</dbReference>
<dbReference type="GO" id="GO:0005524">
    <property type="term" value="F:ATP binding"/>
    <property type="evidence" value="ECO:0007669"/>
    <property type="project" value="UniProtKB-KW"/>
</dbReference>
<dbReference type="GO" id="GO:0016887">
    <property type="term" value="F:ATP hydrolysis activity"/>
    <property type="evidence" value="ECO:0007669"/>
    <property type="project" value="EnsemblFungi"/>
</dbReference>
<dbReference type="GO" id="GO:0140658">
    <property type="term" value="F:ATP-dependent chromatin remodeler activity"/>
    <property type="evidence" value="ECO:0007669"/>
    <property type="project" value="InterPro"/>
</dbReference>
<dbReference type="GO" id="GO:0003677">
    <property type="term" value="F:DNA binding"/>
    <property type="evidence" value="ECO:0007669"/>
    <property type="project" value="UniProtKB-KW"/>
</dbReference>
<dbReference type="GO" id="GO:0042393">
    <property type="term" value="F:histone binding"/>
    <property type="evidence" value="ECO:0007669"/>
    <property type="project" value="TreeGrafter"/>
</dbReference>
<dbReference type="GO" id="GO:0034080">
    <property type="term" value="P:CENP-A containing chromatin assembly"/>
    <property type="evidence" value="ECO:0007669"/>
    <property type="project" value="EnsemblFungi"/>
</dbReference>
<dbReference type="GO" id="GO:0006281">
    <property type="term" value="P:DNA repair"/>
    <property type="evidence" value="ECO:0007669"/>
    <property type="project" value="UniProtKB-KW"/>
</dbReference>
<dbReference type="GO" id="GO:0045944">
    <property type="term" value="P:positive regulation of transcription by RNA polymerase II"/>
    <property type="evidence" value="ECO:0007669"/>
    <property type="project" value="EnsemblFungi"/>
</dbReference>
<dbReference type="GO" id="GO:0032006">
    <property type="term" value="P:regulation of TOR signaling"/>
    <property type="evidence" value="ECO:0007669"/>
    <property type="project" value="EnsemblFungi"/>
</dbReference>
<dbReference type="GO" id="GO:0031509">
    <property type="term" value="P:subtelomeric heterochromatin formation"/>
    <property type="evidence" value="ECO:0007669"/>
    <property type="project" value="EnsemblFungi"/>
</dbReference>
<dbReference type="GO" id="GO:0000722">
    <property type="term" value="P:telomere maintenance via recombination"/>
    <property type="evidence" value="ECO:0007669"/>
    <property type="project" value="EnsemblFungi"/>
</dbReference>
<dbReference type="GO" id="GO:0006366">
    <property type="term" value="P:transcription by RNA polymerase II"/>
    <property type="evidence" value="ECO:0007669"/>
    <property type="project" value="EnsemblFungi"/>
</dbReference>
<dbReference type="CDD" id="cd18002">
    <property type="entry name" value="DEXQc_INO80"/>
    <property type="match status" value="1"/>
</dbReference>
<dbReference type="CDD" id="cd18793">
    <property type="entry name" value="SF2_C_SNF"/>
    <property type="match status" value="1"/>
</dbReference>
<dbReference type="FunFam" id="3.40.50.10810:FF:000022">
    <property type="entry name" value="Blast:Putative DNA helicase Ino80"/>
    <property type="match status" value="1"/>
</dbReference>
<dbReference type="FunFam" id="3.40.50.300:FF:001269">
    <property type="entry name" value="SNF2 family helicase/ATPase"/>
    <property type="match status" value="1"/>
</dbReference>
<dbReference type="Gene3D" id="3.40.50.300">
    <property type="entry name" value="P-loop containing nucleotide triphosphate hydrolases"/>
    <property type="match status" value="1"/>
</dbReference>
<dbReference type="Gene3D" id="3.40.50.10810">
    <property type="entry name" value="Tandem AAA-ATPase domain"/>
    <property type="match status" value="1"/>
</dbReference>
<dbReference type="InterPro" id="IPR020838">
    <property type="entry name" value="DBINO"/>
</dbReference>
<dbReference type="InterPro" id="IPR031047">
    <property type="entry name" value="DEXQc_INO80"/>
</dbReference>
<dbReference type="InterPro" id="IPR014001">
    <property type="entry name" value="Helicase_ATP-bd"/>
</dbReference>
<dbReference type="InterPro" id="IPR001650">
    <property type="entry name" value="Helicase_C-like"/>
</dbReference>
<dbReference type="InterPro" id="IPR050520">
    <property type="entry name" value="INO80/SWR1_helicase"/>
</dbReference>
<dbReference type="InterPro" id="IPR027417">
    <property type="entry name" value="P-loop_NTPase"/>
</dbReference>
<dbReference type="InterPro" id="IPR038718">
    <property type="entry name" value="SNF2-like_sf"/>
</dbReference>
<dbReference type="InterPro" id="IPR049730">
    <property type="entry name" value="SNF2/RAD54-like_C"/>
</dbReference>
<dbReference type="InterPro" id="IPR000330">
    <property type="entry name" value="SNF2_N"/>
</dbReference>
<dbReference type="PANTHER" id="PTHR45685:SF2">
    <property type="entry name" value="CHROMATIN-REMODELING ATPASE INO80"/>
    <property type="match status" value="1"/>
</dbReference>
<dbReference type="PANTHER" id="PTHR45685">
    <property type="entry name" value="HELICASE SRCAP-RELATED"/>
    <property type="match status" value="1"/>
</dbReference>
<dbReference type="Pfam" id="PF13892">
    <property type="entry name" value="DBINO"/>
    <property type="match status" value="1"/>
</dbReference>
<dbReference type="Pfam" id="PF00271">
    <property type="entry name" value="Helicase_C"/>
    <property type="match status" value="1"/>
</dbReference>
<dbReference type="Pfam" id="PF00176">
    <property type="entry name" value="SNF2-rel_dom"/>
    <property type="match status" value="1"/>
</dbReference>
<dbReference type="SMART" id="SM00487">
    <property type="entry name" value="DEXDc"/>
    <property type="match status" value="1"/>
</dbReference>
<dbReference type="SMART" id="SM00490">
    <property type="entry name" value="HELICc"/>
    <property type="match status" value="1"/>
</dbReference>
<dbReference type="SUPFAM" id="SSF52540">
    <property type="entry name" value="P-loop containing nucleoside triphosphate hydrolases"/>
    <property type="match status" value="2"/>
</dbReference>
<dbReference type="PROSITE" id="PS51413">
    <property type="entry name" value="DBINO"/>
    <property type="match status" value="1"/>
</dbReference>
<dbReference type="PROSITE" id="PS51192">
    <property type="entry name" value="HELICASE_ATP_BIND_1"/>
    <property type="match status" value="1"/>
</dbReference>
<dbReference type="PROSITE" id="PS51194">
    <property type="entry name" value="HELICASE_CTER"/>
    <property type="match status" value="1"/>
</dbReference>
<keyword id="KW-0010">Activator</keyword>
<keyword id="KW-0067">ATP-binding</keyword>
<keyword id="KW-0227">DNA damage</keyword>
<keyword id="KW-0234">DNA repair</keyword>
<keyword id="KW-0238">DNA-binding</keyword>
<keyword id="KW-0378">Hydrolase</keyword>
<keyword id="KW-0547">Nucleotide-binding</keyword>
<keyword id="KW-0539">Nucleus</keyword>
<keyword id="KW-0597">Phosphoprotein</keyword>
<keyword id="KW-1185">Reference proteome</keyword>
<keyword id="KW-0804">Transcription</keyword>
<keyword id="KW-0805">Transcription regulation</keyword>
<organism>
    <name type="scientific">Vanderwaltozyma polyspora (strain ATCC 22028 / DSM 70294 / BCRC 21397 / CBS 2163 / NBRC 10782 / NRRL Y-8283 / UCD 57-17)</name>
    <name type="common">Kluyveromyces polysporus</name>
    <dbReference type="NCBI Taxonomy" id="436907"/>
    <lineage>
        <taxon>Eukaryota</taxon>
        <taxon>Fungi</taxon>
        <taxon>Dikarya</taxon>
        <taxon>Ascomycota</taxon>
        <taxon>Saccharomycotina</taxon>
        <taxon>Saccharomycetes</taxon>
        <taxon>Saccharomycetales</taxon>
        <taxon>Saccharomycetaceae</taxon>
        <taxon>Vanderwaltozyma</taxon>
    </lineage>
</organism>
<feature type="chain" id="PRO_0000350965" description="Chromatin-remodeling ATPase INO80">
    <location>
        <begin position="1"/>
        <end position="1556"/>
    </location>
</feature>
<feature type="domain" description="DBINO" evidence="6">
    <location>
        <begin position="572"/>
        <end position="697"/>
    </location>
</feature>
<feature type="domain" description="Helicase ATP-binding" evidence="4">
    <location>
        <begin position="812"/>
        <end position="984"/>
    </location>
</feature>
<feature type="domain" description="Helicase C-terminal" evidence="5">
    <location>
        <begin position="1381"/>
        <end position="1535"/>
    </location>
</feature>
<feature type="region of interest" description="Disordered" evidence="7">
    <location>
        <begin position="153"/>
        <end position="209"/>
    </location>
</feature>
<feature type="region of interest" description="Disordered" evidence="7">
    <location>
        <begin position="236"/>
        <end position="426"/>
    </location>
</feature>
<feature type="region of interest" description="Disordered" evidence="7">
    <location>
        <begin position="502"/>
        <end position="538"/>
    </location>
</feature>
<feature type="region of interest" description="Disordered" evidence="7">
    <location>
        <begin position="751"/>
        <end position="779"/>
    </location>
</feature>
<feature type="short sequence motif" description="DEAQ box">
    <location>
        <begin position="935"/>
        <end position="938"/>
    </location>
</feature>
<feature type="compositionally biased region" description="Basic residues" evidence="7">
    <location>
        <begin position="161"/>
        <end position="172"/>
    </location>
</feature>
<feature type="compositionally biased region" description="Low complexity" evidence="7">
    <location>
        <begin position="181"/>
        <end position="198"/>
    </location>
</feature>
<feature type="compositionally biased region" description="Polar residues" evidence="7">
    <location>
        <begin position="244"/>
        <end position="255"/>
    </location>
</feature>
<feature type="compositionally biased region" description="Acidic residues" evidence="7">
    <location>
        <begin position="335"/>
        <end position="393"/>
    </location>
</feature>
<feature type="compositionally biased region" description="Polar residues" evidence="7">
    <location>
        <begin position="523"/>
        <end position="538"/>
    </location>
</feature>
<feature type="compositionally biased region" description="Basic and acidic residues" evidence="7">
    <location>
        <begin position="759"/>
        <end position="769"/>
    </location>
</feature>
<feature type="compositionally biased region" description="Polar residues" evidence="7">
    <location>
        <begin position="770"/>
        <end position="779"/>
    </location>
</feature>
<feature type="binding site" evidence="4">
    <location>
        <begin position="825"/>
        <end position="832"/>
    </location>
    <ligand>
        <name>ATP</name>
        <dbReference type="ChEBI" id="CHEBI:30616"/>
    </ligand>
</feature>
<feature type="modified residue" description="Phosphothreonine" evidence="1">
    <location>
        <position position="156"/>
    </location>
</feature>
<evidence type="ECO:0000250" key="1"/>
<evidence type="ECO:0000250" key="2">
    <source>
        <dbReference type="UniProtKB" id="P53115"/>
    </source>
</evidence>
<evidence type="ECO:0000250" key="3">
    <source>
        <dbReference type="UniProtKB" id="Q9ULG1"/>
    </source>
</evidence>
<evidence type="ECO:0000255" key="4">
    <source>
        <dbReference type="PROSITE-ProRule" id="PRU00541"/>
    </source>
</evidence>
<evidence type="ECO:0000255" key="5">
    <source>
        <dbReference type="PROSITE-ProRule" id="PRU00542"/>
    </source>
</evidence>
<evidence type="ECO:0000255" key="6">
    <source>
        <dbReference type="PROSITE-ProRule" id="PRU00746"/>
    </source>
</evidence>
<evidence type="ECO:0000256" key="7">
    <source>
        <dbReference type="SAM" id="MobiDB-lite"/>
    </source>
</evidence>
<evidence type="ECO:0000305" key="8"/>
<accession>A7TJI3</accession>
<proteinExistence type="inferred from homology"/>
<protein>
    <recommendedName>
        <fullName evidence="2">Chromatin-remodeling ATPase INO80</fullName>
        <ecNumber evidence="2">3.6.4.-</ecNumber>
    </recommendedName>
</protein>
<reference key="1">
    <citation type="journal article" date="2007" name="Proc. Natl. Acad. Sci. U.S.A.">
        <title>Independent sorting-out of thousands of duplicated gene pairs in two yeast species descended from a whole-genome duplication.</title>
        <authorList>
            <person name="Scannell D.R."/>
            <person name="Frank A.C."/>
            <person name="Conant G.C."/>
            <person name="Byrne K.P."/>
            <person name="Woolfit M."/>
            <person name="Wolfe K.H."/>
        </authorList>
    </citation>
    <scope>NUCLEOTIDE SEQUENCE [LARGE SCALE GENOMIC DNA]</scope>
    <source>
        <strain>ATCC 22028 / DSM 70294 / BCRC 21397 / CBS 2163 / NBRC 10782 / NRRL Y-8283 / UCD 57-17</strain>
    </source>
</reference>
<name>INO80_VANPO</name>
<sequence length="1556" mass="180155">MSLAKLLNNDDDDNNINLPNINVNNTNTNDTSSSIVTNTHTTNTTTNLQKEKFLNKLNNDFNLLNKRDNLELNYQDWKFLNYQEFELLNEWNQQSKEWNNSIKNFEYLYSLMKKYKSEWENYLTLKSSDKYLKNVVNDCLINSNTNNLKSKSKLKTDTKTKAKSKSKSKLKLKSNSDAKVKSKSSNAKAKAKTKSVSTQQKRKRTTSIKNLLEKEDSALTSLDDMDEIDDVNEILNNDNNDEITQNSKDLSTTTATEKKLNTKTSPSKKRKDEVRVAMKKPMTSTPNVKTENKSKQKSNKKNIDADDNTYDDNNLINGKDTEELDDIEKAKDLEDNTDIEIEGTNENEDEDEDEDEDEDEDEEDEEEGEEEEEEEEDEEGVINMIENEDDEDYFAPGKKSGRQNASKVAGEPAAPVPKTPTTIHSDRERIVRELIKMCNKNKNKKSRKRRFTNSIVTDYNPEENKLIVKVTLKQYHVRKLKKLINDAKKLREEEEMKLKKSLMKEAENAEELEGPSSKKKKLNSGTAQNENGGEQNSEFIQNTHDLPTYGMQMTLKEAKAIKRHYDNTFFTILKDLARKDSAKMARLVQQIQSIRATNFKKNSSVCAREARKWQQRNFKQVKDFQTRARRGIREMLNYWKKNEREERDLKKKAEKVAMEQARKEEEDRENVRQAKKLNFLLTQTELYSHFIGSKIKTNELEGNMKDDEFDENEDNLMNNIDLDSTSSVKTDFKTIDFDNEDDDELRRKAAQNASNVLQKSREKTKKFDNDTSNGEELNFQNPTSLGEVVIEQPSILACTLKEYQLKGLNWLANLYDQGINGILADEMGLGKTVQSISVLAHLAEKYNIWGPFLVVTPASTLHNWVNEISKFVPQFKILPYWGNSNDRKILRRFWDRKNLRYNKDSPFHVMITSYQMVVSDTSYLQKMKWQYMILDEAQAIKSSQSSRWRNLLSFHCRNRLLLTGTPIQNNMQELWALLHFIMPSLFDSHDEFNDWFSKDIESHAEANTKLNQQQLRRLHMILKPFMLRRVKKNVQSELGDKIEIDVMCDLTQRQAKLYQILKSQMSTNYDVIENAAGDDDTGSDQNMINAVMQFRKVCNHPDLFERADVDSPFSFSIFGKSSSLSRDNEPLVDILYSTRNPITYHLPRLIYNDLILPNYENDLGLKNKLLNYTFSIFNNESTCKEISRVTGLTYGEIKRVVHRDLLMNAIHLKEPYSRQTFLEKISVIEDNDKTFSDMNFKSNLKLIERSAKLDALSRVTSTGVLNSLLNIKEQVFDNEYYNAISRSYHPNVSSSPVSIQVLGNRHFSIQQEEELFKPVISKALSEIPASTQYNMAVEKKIPLHDFPVSGLYPSPLNKSFSSYISMPSMDRFITESAKLKKLDELLVELKKGDHRVLIYFQMTKMMDLMEEYLTYRQYSHIRLDGSSKLEDRRDLVHDWQTRPDIFIFLLSTRAGGLGINLTAADTVIFYDSDWNPTIDSQAMDRAHRLGQTRQVTVYRLLIRGTIEERMRDRAKQKEHVQQVVMEGKTLQKDVKTIESGGDVKAAAAASTALTTN</sequence>
<gene>
    <name type="primary">INO80</name>
    <name type="ORF">Kpol_534p5</name>
</gene>
<comment type="function">
    <text evidence="6">ATPase component of the INO80 complex which remodels chromatin by shifting nucleosomes and is involved in DNA repair.</text>
</comment>
<comment type="catalytic activity">
    <reaction evidence="2">
        <text>ATP + H2O = ADP + phosphate + H(+)</text>
        <dbReference type="Rhea" id="RHEA:13065"/>
        <dbReference type="ChEBI" id="CHEBI:15377"/>
        <dbReference type="ChEBI" id="CHEBI:15378"/>
        <dbReference type="ChEBI" id="CHEBI:30616"/>
        <dbReference type="ChEBI" id="CHEBI:43474"/>
        <dbReference type="ChEBI" id="CHEBI:456216"/>
    </reaction>
</comment>
<comment type="subunit">
    <text evidence="6">Component of the INO80 chromatin-remodeling complex.</text>
</comment>
<comment type="subcellular location">
    <subcellularLocation>
        <location evidence="6">Nucleus</location>
    </subcellularLocation>
</comment>
<comment type="domain">
    <text evidence="3">The DBINO region is involved in binding to DNA.</text>
</comment>
<comment type="similarity">
    <text evidence="8">Belongs to the SNF2/RAD54 helicase family.</text>
</comment>